<reference key="1">
    <citation type="journal article" date="2007" name="PLoS ONE">
        <title>Patterns of genome evolution among the microsporidian parasites Encephalitozoon cuniculi, Antonospora locustae and Enterocytozoon bieneusi.</title>
        <authorList>
            <person name="Corradi N."/>
            <person name="Akiyoshi D.E."/>
            <person name="Morrison H.G."/>
            <person name="Feng X."/>
            <person name="Weiss L.M."/>
            <person name="Tzipori S."/>
            <person name="Keeling P.J."/>
        </authorList>
    </citation>
    <scope>NUCLEOTIDE SEQUENCE [LARGE SCALE GENOMIC DNA]</scope>
    <source>
        <strain>H348</strain>
    </source>
</reference>
<reference key="2">
    <citation type="journal article" date="2009" name="PLoS Pathog.">
        <title>Genomic survey of the non-cultivatable opportunistic human pathogen, Enterocytozoon bieneusi.</title>
        <authorList>
            <person name="Akiyoshi D.E."/>
            <person name="Morrison H.G."/>
            <person name="Lei S."/>
            <person name="Feng X."/>
            <person name="Zhang Q."/>
            <person name="Corradi N."/>
            <person name="Mayanja H."/>
            <person name="Tumwine J.K."/>
            <person name="Keeling P.J."/>
            <person name="Weiss L.M."/>
            <person name="Tzipori S."/>
        </authorList>
    </citation>
    <scope>NUCLEOTIDE SEQUENCE [LARGE SCALE GENOMIC DNA]</scope>
    <source>
        <strain>H348</strain>
    </source>
</reference>
<keyword id="KW-0010">Activator</keyword>
<keyword id="KW-0238">DNA-binding</keyword>
<keyword id="KW-0539">Nucleus</keyword>
<keyword id="KW-0346">Stress response</keyword>
<keyword id="KW-0804">Transcription</keyword>
<keyword id="KW-0805">Transcription regulation</keyword>
<organism>
    <name type="scientific">Enterocytozoon bieneusi (strain H348)</name>
    <name type="common">Microsporidian parasite</name>
    <dbReference type="NCBI Taxonomy" id="481877"/>
    <lineage>
        <taxon>Eukaryota</taxon>
        <taxon>Fungi</taxon>
        <taxon>Fungi incertae sedis</taxon>
        <taxon>Microsporidia</taxon>
        <taxon>Enterocytozoonidae</taxon>
        <taxon>Enterocytozoon</taxon>
    </lineage>
</organism>
<comment type="function">
    <text evidence="1">DNA-binding transcription factor that specifically binds heat shock promoter elements (HSE) and activates transcription.</text>
</comment>
<comment type="subunit">
    <text evidence="1">Homotrimer (By similarity). Homotrimerization increases the affinity of HSF1 to DNA (By similarity).</text>
</comment>
<comment type="subcellular location">
    <subcellularLocation>
        <location evidence="1">Nucleus</location>
    </subcellularLocation>
</comment>
<comment type="similarity">
    <text evidence="3">Belongs to the HSF family.</text>
</comment>
<sequence>MAKRKEVTEISEMDIKKSGFVNRLYRETCDISNKYIKFDDDGDKLIIPNKIDFIKKALNKISSTKDYSSFVRQLNNYGFTKIKLDNGDSNCDIYYHQNFHRDHPDLISLITRDKSKNGDYKDNMTTFINSLQYLASCNYKQQKEINDLKDRIKTLETKYATLYEIISNAFRQGIEQYQKHNTMYFNNNSLLKNMFTYNQELDDLKDNTNVYNNAKLINQLKLDAKNSNQDDNIKKTKNAFDEFYF</sequence>
<accession>B7XIV9</accession>
<protein>
    <recommendedName>
        <fullName evidence="4">Heat shock transcription factor</fullName>
        <shortName evidence="3">HSTF</shortName>
    </recommendedName>
    <alternativeName>
        <fullName evidence="3">Heat shock factor protein</fullName>
        <shortName evidence="3">HSF</shortName>
    </alternativeName>
</protein>
<gene>
    <name evidence="3" type="primary">HSF</name>
    <name evidence="4" type="ORF">EBI_23973</name>
</gene>
<proteinExistence type="inferred from homology"/>
<feature type="chain" id="PRO_0000388429" description="Heat shock transcription factor">
    <location>
        <begin position="1"/>
        <end position="245"/>
    </location>
</feature>
<feature type="DNA-binding region" evidence="1">
    <location>
        <begin position="17"/>
        <end position="115"/>
    </location>
</feature>
<feature type="region of interest" description="Involved in trimerization" evidence="2">
    <location>
        <begin position="130"/>
        <end position="169"/>
    </location>
</feature>
<evidence type="ECO:0000250" key="1">
    <source>
        <dbReference type="UniProtKB" id="P10961"/>
    </source>
</evidence>
<evidence type="ECO:0000250" key="2">
    <source>
        <dbReference type="UniProtKB" id="P22121"/>
    </source>
</evidence>
<evidence type="ECO:0000305" key="3"/>
<evidence type="ECO:0000312" key="4">
    <source>
        <dbReference type="EMBL" id="EED44099.1"/>
    </source>
</evidence>
<name>HSF_ENTBH</name>
<dbReference type="EMBL" id="ABGB01000022">
    <property type="protein sequence ID" value="EED44099.1"/>
    <property type="molecule type" value="Genomic_DNA"/>
</dbReference>
<dbReference type="RefSeq" id="XP_002649937.1">
    <property type="nucleotide sequence ID" value="XM_002649891.1"/>
</dbReference>
<dbReference type="SMR" id="B7XIV9"/>
<dbReference type="STRING" id="481877.B7XIV9"/>
<dbReference type="VEuPathDB" id="MicrosporidiaDB:EBI_23973"/>
<dbReference type="HOGENOM" id="CLU_030308_8_1_1"/>
<dbReference type="InParanoid" id="B7XIV9"/>
<dbReference type="OMA" id="LMRWCDE"/>
<dbReference type="OrthoDB" id="60033at2759"/>
<dbReference type="GO" id="GO:0005634">
    <property type="term" value="C:nucleus"/>
    <property type="evidence" value="ECO:0007669"/>
    <property type="project" value="UniProtKB-SubCell"/>
</dbReference>
<dbReference type="GO" id="GO:0003700">
    <property type="term" value="F:DNA-binding transcription factor activity"/>
    <property type="evidence" value="ECO:0007669"/>
    <property type="project" value="InterPro"/>
</dbReference>
<dbReference type="GO" id="GO:0043565">
    <property type="term" value="F:sequence-specific DNA binding"/>
    <property type="evidence" value="ECO:0007669"/>
    <property type="project" value="InterPro"/>
</dbReference>
<dbReference type="Gene3D" id="1.10.10.10">
    <property type="entry name" value="Winged helix-like DNA-binding domain superfamily/Winged helix DNA-binding domain"/>
    <property type="match status" value="1"/>
</dbReference>
<dbReference type="InterPro" id="IPR000232">
    <property type="entry name" value="HSF_DNA-bd"/>
</dbReference>
<dbReference type="InterPro" id="IPR036388">
    <property type="entry name" value="WH-like_DNA-bd_sf"/>
</dbReference>
<dbReference type="InterPro" id="IPR036390">
    <property type="entry name" value="WH_DNA-bd_sf"/>
</dbReference>
<dbReference type="PANTHER" id="PTHR10015">
    <property type="entry name" value="HEAT SHOCK TRANSCRIPTION FACTOR"/>
    <property type="match status" value="1"/>
</dbReference>
<dbReference type="PANTHER" id="PTHR10015:SF465">
    <property type="entry name" value="HSF-TYPE DNA-BINDING DOMAIN-CONTAINING PROTEIN"/>
    <property type="match status" value="1"/>
</dbReference>
<dbReference type="Pfam" id="PF00447">
    <property type="entry name" value="HSF_DNA-bind"/>
    <property type="match status" value="1"/>
</dbReference>
<dbReference type="SMART" id="SM00415">
    <property type="entry name" value="HSF"/>
    <property type="match status" value="1"/>
</dbReference>
<dbReference type="SUPFAM" id="SSF46785">
    <property type="entry name" value="Winged helix' DNA-binding domain"/>
    <property type="match status" value="1"/>
</dbReference>